<dbReference type="EC" id="1.14.-.-"/>
<dbReference type="EMBL" id="AL662934">
    <property type="protein sequence ID" value="CAD39530.1"/>
    <property type="status" value="ALT_INIT"/>
    <property type="molecule type" value="Genomic_DNA"/>
</dbReference>
<dbReference type="EMBL" id="AL662936">
    <property type="protein sequence ID" value="CAD39708.1"/>
    <property type="status" value="ALT_INIT"/>
    <property type="molecule type" value="Genomic_DNA"/>
</dbReference>
<dbReference type="EMBL" id="AP008210">
    <property type="protein sequence ID" value="BAF14091.1"/>
    <property type="status" value="ALT_INIT"/>
    <property type="molecule type" value="Genomic_DNA"/>
</dbReference>
<dbReference type="EMBL" id="AP014960">
    <property type="status" value="NOT_ANNOTATED_CDS"/>
    <property type="molecule type" value="Genomic_DNA"/>
</dbReference>
<dbReference type="EMBL" id="AK071546">
    <property type="status" value="NOT_ANNOTATED_CDS"/>
    <property type="molecule type" value="mRNA"/>
</dbReference>
<dbReference type="RefSeq" id="XP_015633968.1">
    <property type="nucleotide sequence ID" value="XM_015778482.1"/>
</dbReference>
<dbReference type="SMR" id="Q7X7X4"/>
<dbReference type="FunCoup" id="Q7X7X4">
    <property type="interactions" value="335"/>
</dbReference>
<dbReference type="STRING" id="39947.Q7X7X4"/>
<dbReference type="PaxDb" id="39947-Q7X7X4"/>
<dbReference type="KEGG" id="dosa:Os04g0180400"/>
<dbReference type="eggNOG" id="KOG0156">
    <property type="taxonomic scope" value="Eukaryota"/>
</dbReference>
<dbReference type="HOGENOM" id="CLU_001570_4_1_1"/>
<dbReference type="InParanoid" id="Q7X7X4"/>
<dbReference type="OrthoDB" id="1470350at2759"/>
<dbReference type="PlantReactome" id="R-OSA-1119308">
    <property type="pathway name" value="Momilactone biosynthesis"/>
</dbReference>
<dbReference type="Proteomes" id="UP000000763">
    <property type="component" value="Chromosome 4"/>
</dbReference>
<dbReference type="Proteomes" id="UP000059680">
    <property type="component" value="Chromosome 4"/>
</dbReference>
<dbReference type="GO" id="GO:0016020">
    <property type="term" value="C:membrane"/>
    <property type="evidence" value="ECO:0007669"/>
    <property type="project" value="UniProtKB-SubCell"/>
</dbReference>
<dbReference type="GO" id="GO:0020037">
    <property type="term" value="F:heme binding"/>
    <property type="evidence" value="ECO:0007669"/>
    <property type="project" value="InterPro"/>
</dbReference>
<dbReference type="GO" id="GO:0005506">
    <property type="term" value="F:iron ion binding"/>
    <property type="evidence" value="ECO:0007669"/>
    <property type="project" value="InterPro"/>
</dbReference>
<dbReference type="GO" id="GO:0004497">
    <property type="term" value="F:monooxygenase activity"/>
    <property type="evidence" value="ECO:0007669"/>
    <property type="project" value="UniProtKB-KW"/>
</dbReference>
<dbReference type="GO" id="GO:0016705">
    <property type="term" value="F:oxidoreductase activity, acting on paired donors, with incorporation or reduction of molecular oxygen"/>
    <property type="evidence" value="ECO:0007669"/>
    <property type="project" value="InterPro"/>
</dbReference>
<dbReference type="GO" id="GO:0006952">
    <property type="term" value="P:defense response"/>
    <property type="evidence" value="ECO:0007669"/>
    <property type="project" value="UniProtKB-KW"/>
</dbReference>
<dbReference type="CDD" id="cd11072">
    <property type="entry name" value="CYP71-like"/>
    <property type="match status" value="1"/>
</dbReference>
<dbReference type="FunFam" id="1.10.630.10:FF:000043">
    <property type="entry name" value="Cytochrome P450 99A2"/>
    <property type="match status" value="1"/>
</dbReference>
<dbReference type="Gene3D" id="1.10.630.10">
    <property type="entry name" value="Cytochrome P450"/>
    <property type="match status" value="1"/>
</dbReference>
<dbReference type="InterPro" id="IPR001128">
    <property type="entry name" value="Cyt_P450"/>
</dbReference>
<dbReference type="InterPro" id="IPR017972">
    <property type="entry name" value="Cyt_P450_CS"/>
</dbReference>
<dbReference type="InterPro" id="IPR002401">
    <property type="entry name" value="Cyt_P450_E_grp-I"/>
</dbReference>
<dbReference type="InterPro" id="IPR036396">
    <property type="entry name" value="Cyt_P450_sf"/>
</dbReference>
<dbReference type="PANTHER" id="PTHR47955:SF8">
    <property type="entry name" value="CYTOCHROME P450 71D11-LIKE"/>
    <property type="match status" value="1"/>
</dbReference>
<dbReference type="PANTHER" id="PTHR47955">
    <property type="entry name" value="CYTOCHROME P450 FAMILY 71 PROTEIN"/>
    <property type="match status" value="1"/>
</dbReference>
<dbReference type="Pfam" id="PF00067">
    <property type="entry name" value="p450"/>
    <property type="match status" value="1"/>
</dbReference>
<dbReference type="PRINTS" id="PR00463">
    <property type="entry name" value="EP450I"/>
</dbReference>
<dbReference type="PRINTS" id="PR00385">
    <property type="entry name" value="P450"/>
</dbReference>
<dbReference type="SUPFAM" id="SSF48264">
    <property type="entry name" value="Cytochrome P450"/>
    <property type="match status" value="1"/>
</dbReference>
<dbReference type="PROSITE" id="PS00086">
    <property type="entry name" value="CYTOCHROME_P450"/>
    <property type="match status" value="1"/>
</dbReference>
<gene>
    <name type="primary">CYP99A2</name>
    <name type="ordered locus">Os04g0180400</name>
    <name type="ordered locus">LOC_Os04g10160</name>
    <name type="ORF">OSJNBa0027O01.2</name>
    <name type="ORF">OSJNBa0052P16.24</name>
</gene>
<name>C99A2_ORYSJ</name>
<keyword id="KW-0349">Heme</keyword>
<keyword id="KW-0408">Iron</keyword>
<keyword id="KW-0472">Membrane</keyword>
<keyword id="KW-0479">Metal-binding</keyword>
<keyword id="KW-0503">Monooxygenase</keyword>
<keyword id="KW-0560">Oxidoreductase</keyword>
<keyword id="KW-0611">Plant defense</keyword>
<keyword id="KW-1185">Reference proteome</keyword>
<keyword id="KW-0812">Transmembrane</keyword>
<keyword id="KW-1133">Transmembrane helix</keyword>
<accession>Q7X7X4</accession>
<proteinExistence type="evidence at transcript level"/>
<comment type="function">
    <text evidence="3">Involved in momilactone phytoalexins biosynthesis. Participates in the biosynthetic steps between 9-beta-pimara-7,15-diene and 3-beta-hydroxy-9-beta-pimara-7,15-dien-19,6-beta-olide.</text>
</comment>
<comment type="cofactor">
    <cofactor evidence="1">
        <name>heme</name>
        <dbReference type="ChEBI" id="CHEBI:30413"/>
    </cofactor>
</comment>
<comment type="subcellular location">
    <subcellularLocation>
        <location evidence="4">Membrane</location>
        <topology evidence="4">Multi-pass membrane protein</topology>
    </subcellularLocation>
</comment>
<comment type="induction">
    <text evidence="3">By chitin oligosaccharide elicitor.</text>
</comment>
<comment type="miscellaneous">
    <text>3-beta-hydroxy-9-beta-pimara-7,15-dien-19,6-beta-olide is a precursor of the phytoalexins momilactones A and B. Phytoalexins are diterpenoid secondary metabolites involved in the defense mechanism of the plant and produced in response to attack (by a pathogen, elicitor or UV irradiation). Momilactone B can also act as an allochemical (an antimicrobial and allelopathic agent), being constitutively produced in the root of the plant and secreted to the rhizosphere where it suppresses the growth of neighboring plants and soil microorganisms.</text>
</comment>
<comment type="similarity">
    <text evidence="4">Belongs to the cytochrome P450 family.</text>
</comment>
<comment type="sequence caution" evidence="4">
    <conflict type="erroneous initiation">
        <sequence resource="EMBL-CDS" id="BAF14091"/>
    </conflict>
</comment>
<comment type="sequence caution" evidence="4">
    <conflict type="erroneous initiation">
        <sequence resource="EMBL-CDS" id="CAD39530"/>
    </conflict>
</comment>
<comment type="sequence caution" evidence="4">
    <conflict type="erroneous initiation">
        <sequence resource="EMBL-CDS" id="CAD39708"/>
    </conflict>
</comment>
<evidence type="ECO:0000250" key="1"/>
<evidence type="ECO:0000255" key="2"/>
<evidence type="ECO:0000269" key="3">
    <source>
    </source>
</evidence>
<evidence type="ECO:0000305" key="4"/>
<sequence length="532" mass="59533">MQFFAKQNCQVNLLTNNPSSNPRFIMEINSAATLTLVSLLTLPILLALLTRKSSSKKRRPPGPWNLPLVGGLLHLLRSHPQVALRELASKYGPVMFLRMGQIDTVVVSSPAAAQEVLRDKDVMFASRPSLLVSEIFCYDNLDVGFAPYGAYWRMLRKLCTVELLSTKVVRQLAPVRNDETLTLVRNIKAASSGHGGGGGKKPVTLARLLTTCTNTITAKAAFGQACGVELQEQFLTALDVGLKFSGGFCFGDLFPSLRFIDAMTGLRSRLWRARGQLDSVFDKIIAQCEEHQGDSLVNVLLRIRDQGDLEFPFGTTNIKAIILDMFTGGTETTSSAAEWVMSELMRNPEVMAKVQAEVRRVFDNKSPQDHEGLIDNLRYMKMVIKETMRLNPVLPLLMPHLCRETCDIGGYEVVEGTRVVINSWAMARSPEYWDDAEEFKPERFEDGMADYKGSRFEYLPFGTGRRRCPGDTFGMVLLELIVARLLYYFDWSLPAGMQPDDVDMDFVVTATTRRKNHLQLVASPYKLAPIQI</sequence>
<reference key="1">
    <citation type="journal article" date="2002" name="Nature">
        <title>Sequence and analysis of rice chromosome 4.</title>
        <authorList>
            <person name="Feng Q."/>
            <person name="Zhang Y."/>
            <person name="Hao P."/>
            <person name="Wang S."/>
            <person name="Fu G."/>
            <person name="Huang Y."/>
            <person name="Li Y."/>
            <person name="Zhu J."/>
            <person name="Liu Y."/>
            <person name="Hu X."/>
            <person name="Jia P."/>
            <person name="Zhang Y."/>
            <person name="Zhao Q."/>
            <person name="Ying K."/>
            <person name="Yu S."/>
            <person name="Tang Y."/>
            <person name="Weng Q."/>
            <person name="Zhang L."/>
            <person name="Lu Y."/>
            <person name="Mu J."/>
            <person name="Lu Y."/>
            <person name="Zhang L.S."/>
            <person name="Yu Z."/>
            <person name="Fan D."/>
            <person name="Liu X."/>
            <person name="Lu T."/>
            <person name="Li C."/>
            <person name="Wu Y."/>
            <person name="Sun T."/>
            <person name="Lei H."/>
            <person name="Li T."/>
            <person name="Hu H."/>
            <person name="Guan J."/>
            <person name="Wu M."/>
            <person name="Zhang R."/>
            <person name="Zhou B."/>
            <person name="Chen Z."/>
            <person name="Chen L."/>
            <person name="Jin Z."/>
            <person name="Wang R."/>
            <person name="Yin H."/>
            <person name="Cai Z."/>
            <person name="Ren S."/>
            <person name="Lv G."/>
            <person name="Gu W."/>
            <person name="Zhu G."/>
            <person name="Tu Y."/>
            <person name="Jia J."/>
            <person name="Zhang Y."/>
            <person name="Chen J."/>
            <person name="Kang H."/>
            <person name="Chen X."/>
            <person name="Shao C."/>
            <person name="Sun Y."/>
            <person name="Hu Q."/>
            <person name="Zhang X."/>
            <person name="Zhang W."/>
            <person name="Wang L."/>
            <person name="Ding C."/>
            <person name="Sheng H."/>
            <person name="Gu J."/>
            <person name="Chen S."/>
            <person name="Ni L."/>
            <person name="Zhu F."/>
            <person name="Chen W."/>
            <person name="Lan L."/>
            <person name="Lai Y."/>
            <person name="Cheng Z."/>
            <person name="Gu M."/>
            <person name="Jiang J."/>
            <person name="Li J."/>
            <person name="Hong G."/>
            <person name="Xue Y."/>
            <person name="Han B."/>
        </authorList>
    </citation>
    <scope>NUCLEOTIDE SEQUENCE [LARGE SCALE GENOMIC DNA]</scope>
    <source>
        <strain>cv. Nipponbare</strain>
    </source>
</reference>
<reference key="2">
    <citation type="journal article" date="2005" name="Nature">
        <title>The map-based sequence of the rice genome.</title>
        <authorList>
            <consortium name="International rice genome sequencing project (IRGSP)"/>
        </authorList>
    </citation>
    <scope>NUCLEOTIDE SEQUENCE [LARGE SCALE GENOMIC DNA]</scope>
    <source>
        <strain>cv. Nipponbare</strain>
    </source>
</reference>
<reference key="3">
    <citation type="journal article" date="2008" name="Nucleic Acids Res.">
        <title>The rice annotation project database (RAP-DB): 2008 update.</title>
        <authorList>
            <consortium name="The rice annotation project (RAP)"/>
        </authorList>
    </citation>
    <scope>GENOME REANNOTATION</scope>
    <source>
        <strain>cv. Nipponbare</strain>
    </source>
</reference>
<reference key="4">
    <citation type="journal article" date="2013" name="Rice">
        <title>Improvement of the Oryza sativa Nipponbare reference genome using next generation sequence and optical map data.</title>
        <authorList>
            <person name="Kawahara Y."/>
            <person name="de la Bastide M."/>
            <person name="Hamilton J.P."/>
            <person name="Kanamori H."/>
            <person name="McCombie W.R."/>
            <person name="Ouyang S."/>
            <person name="Schwartz D.C."/>
            <person name="Tanaka T."/>
            <person name="Wu J."/>
            <person name="Zhou S."/>
            <person name="Childs K.L."/>
            <person name="Davidson R.M."/>
            <person name="Lin H."/>
            <person name="Quesada-Ocampo L."/>
            <person name="Vaillancourt B."/>
            <person name="Sakai H."/>
            <person name="Lee S.S."/>
            <person name="Kim J."/>
            <person name="Numa H."/>
            <person name="Itoh T."/>
            <person name="Buell C.R."/>
            <person name="Matsumoto T."/>
        </authorList>
    </citation>
    <scope>GENOME REANNOTATION</scope>
    <source>
        <strain>cv. Nipponbare</strain>
    </source>
</reference>
<reference key="5">
    <citation type="journal article" date="2003" name="Science">
        <title>Collection, mapping, and annotation of over 28,000 cDNA clones from japonica rice.</title>
        <authorList>
            <consortium name="The rice full-length cDNA consortium"/>
        </authorList>
    </citation>
    <scope>NUCLEOTIDE SEQUENCE [LARGE SCALE MRNA] OF 5-532</scope>
    <source>
        <strain>cv. Nipponbare</strain>
    </source>
</reference>
<reference key="6">
    <citation type="journal article" date="2007" name="J. Biol. Chem.">
        <title>Identification of a biosynthetic gene cluster in rice for momilactones.</title>
        <authorList>
            <person name="Shimura K."/>
            <person name="Okada A."/>
            <person name="Okada K."/>
            <person name="Jikumaru Y."/>
            <person name="Ko K.-W."/>
            <person name="Toyomasu T."/>
            <person name="Sassa T."/>
            <person name="Hasegawa M."/>
            <person name="Kodama O."/>
            <person name="Shibuya N."/>
            <person name="Koga J."/>
            <person name="Nojiri H."/>
            <person name="Yamane H."/>
        </authorList>
    </citation>
    <scope>FUNCTION</scope>
    <scope>INDUCTION</scope>
</reference>
<protein>
    <recommendedName>
        <fullName>Cytochrome P450 99A2</fullName>
        <ecNumber>1.14.-.-</ecNumber>
    </recommendedName>
</protein>
<feature type="chain" id="PRO_0000349106" description="Cytochrome P450 99A2">
    <location>
        <begin position="1"/>
        <end position="532"/>
    </location>
</feature>
<feature type="transmembrane region" description="Helical" evidence="2">
    <location>
        <begin position="30"/>
        <end position="50"/>
    </location>
</feature>
<feature type="transmembrane region" description="Helical" evidence="2">
    <location>
        <begin position="473"/>
        <end position="493"/>
    </location>
</feature>
<feature type="binding site" description="axial binding residue" evidence="1">
    <location>
        <position position="468"/>
    </location>
    <ligand>
        <name>heme</name>
        <dbReference type="ChEBI" id="CHEBI:30413"/>
    </ligand>
    <ligandPart>
        <name>Fe</name>
        <dbReference type="ChEBI" id="CHEBI:18248"/>
    </ligandPart>
</feature>
<organism>
    <name type="scientific">Oryza sativa subsp. japonica</name>
    <name type="common">Rice</name>
    <dbReference type="NCBI Taxonomy" id="39947"/>
    <lineage>
        <taxon>Eukaryota</taxon>
        <taxon>Viridiplantae</taxon>
        <taxon>Streptophyta</taxon>
        <taxon>Embryophyta</taxon>
        <taxon>Tracheophyta</taxon>
        <taxon>Spermatophyta</taxon>
        <taxon>Magnoliopsida</taxon>
        <taxon>Liliopsida</taxon>
        <taxon>Poales</taxon>
        <taxon>Poaceae</taxon>
        <taxon>BOP clade</taxon>
        <taxon>Oryzoideae</taxon>
        <taxon>Oryzeae</taxon>
        <taxon>Oryzinae</taxon>
        <taxon>Oryza</taxon>
        <taxon>Oryza sativa</taxon>
    </lineage>
</organism>